<evidence type="ECO:0000255" key="1">
    <source>
        <dbReference type="HAMAP-Rule" id="MF_00415"/>
    </source>
</evidence>
<evidence type="ECO:0000256" key="2">
    <source>
        <dbReference type="SAM" id="MobiDB-lite"/>
    </source>
</evidence>
<protein>
    <recommendedName>
        <fullName evidence="1">Flagellar L-ring protein</fullName>
    </recommendedName>
    <alternativeName>
        <fullName evidence="1">Basal body L-ring protein</fullName>
    </alternativeName>
</protein>
<comment type="function">
    <text evidence="1">Assembles around the rod to form the L-ring and probably protects the motor/basal body from shearing forces during rotation.</text>
</comment>
<comment type="subunit">
    <text evidence="1">The basal body constitutes a major portion of the flagellar organelle and consists of four rings (L,P,S, and M) mounted on a central rod.</text>
</comment>
<comment type="subcellular location">
    <subcellularLocation>
        <location evidence="1">Cell outer membrane</location>
        <topology evidence="1">Lipid-anchor</topology>
    </subcellularLocation>
    <subcellularLocation>
        <location evidence="1">Bacterial flagellum basal body</location>
    </subcellularLocation>
</comment>
<comment type="similarity">
    <text evidence="1">Belongs to the FlgH family.</text>
</comment>
<sequence>MNRLMIVSLLGIATVLGGCVNPPPKPNDPYYAPVLPRTPLPAAQNNGAIYQAGFEQNLYDDRKAFRVGDIITITLNEKTQASKKANSDIQKDSKTKMGLTSLFGSGMTTNNPIGGGDLSLSAEYGGSRDAKGDSQAGQSNSLTGSITVTVAEVLPNGILSVRGEKWMTLNTGNELVRIAGLVRADDIATDNTVPSTRVADARITYSGTGAFADASQPGWLDRFFLSPLWPF</sequence>
<dbReference type="EMBL" id="CP000744">
    <property type="protein sequence ID" value="ABR81762.1"/>
    <property type="molecule type" value="Genomic_DNA"/>
</dbReference>
<dbReference type="RefSeq" id="WP_012076725.1">
    <property type="nucleotide sequence ID" value="NC_009656.1"/>
</dbReference>
<dbReference type="SMR" id="A6V9B2"/>
<dbReference type="KEGG" id="pap:PSPA7_4294"/>
<dbReference type="HOGENOM" id="CLU_069313_0_2_6"/>
<dbReference type="Proteomes" id="UP000001582">
    <property type="component" value="Chromosome"/>
</dbReference>
<dbReference type="GO" id="GO:0009427">
    <property type="term" value="C:bacterial-type flagellum basal body, distal rod, L ring"/>
    <property type="evidence" value="ECO:0007669"/>
    <property type="project" value="InterPro"/>
</dbReference>
<dbReference type="GO" id="GO:0009279">
    <property type="term" value="C:cell outer membrane"/>
    <property type="evidence" value="ECO:0007669"/>
    <property type="project" value="UniProtKB-SubCell"/>
</dbReference>
<dbReference type="GO" id="GO:0003774">
    <property type="term" value="F:cytoskeletal motor activity"/>
    <property type="evidence" value="ECO:0007669"/>
    <property type="project" value="InterPro"/>
</dbReference>
<dbReference type="GO" id="GO:0071973">
    <property type="term" value="P:bacterial-type flagellum-dependent cell motility"/>
    <property type="evidence" value="ECO:0007669"/>
    <property type="project" value="InterPro"/>
</dbReference>
<dbReference type="HAMAP" id="MF_00415">
    <property type="entry name" value="FlgH"/>
    <property type="match status" value="1"/>
</dbReference>
<dbReference type="InterPro" id="IPR000527">
    <property type="entry name" value="Flag_Lring"/>
</dbReference>
<dbReference type="NCBIfam" id="NF001304">
    <property type="entry name" value="PRK00249.1-4"/>
    <property type="match status" value="1"/>
</dbReference>
<dbReference type="PANTHER" id="PTHR34933">
    <property type="entry name" value="FLAGELLAR L-RING PROTEIN"/>
    <property type="match status" value="1"/>
</dbReference>
<dbReference type="PANTHER" id="PTHR34933:SF1">
    <property type="entry name" value="FLAGELLAR L-RING PROTEIN"/>
    <property type="match status" value="1"/>
</dbReference>
<dbReference type="Pfam" id="PF02107">
    <property type="entry name" value="FlgH"/>
    <property type="match status" value="1"/>
</dbReference>
<dbReference type="PRINTS" id="PR01008">
    <property type="entry name" value="FLGLRINGFLGH"/>
</dbReference>
<dbReference type="PROSITE" id="PS51257">
    <property type="entry name" value="PROKAR_LIPOPROTEIN"/>
    <property type="match status" value="1"/>
</dbReference>
<proteinExistence type="inferred from homology"/>
<organism>
    <name type="scientific">Pseudomonas paraeruginosa (strain DSM 24068 / PA7)</name>
    <name type="common">Pseudomonas aeruginosa (strain PA7)</name>
    <dbReference type="NCBI Taxonomy" id="381754"/>
    <lineage>
        <taxon>Bacteria</taxon>
        <taxon>Pseudomonadati</taxon>
        <taxon>Pseudomonadota</taxon>
        <taxon>Gammaproteobacteria</taxon>
        <taxon>Pseudomonadales</taxon>
        <taxon>Pseudomonadaceae</taxon>
        <taxon>Pseudomonas</taxon>
        <taxon>Pseudomonas paraeruginosa</taxon>
    </lineage>
</organism>
<reference key="1">
    <citation type="submission" date="2007-06" db="EMBL/GenBank/DDBJ databases">
        <authorList>
            <person name="Dodson R.J."/>
            <person name="Harkins D."/>
            <person name="Paulsen I.T."/>
        </authorList>
    </citation>
    <scope>NUCLEOTIDE SEQUENCE [LARGE SCALE GENOMIC DNA]</scope>
    <source>
        <strain>DSM 24068 / PA7</strain>
    </source>
</reference>
<gene>
    <name evidence="1" type="primary">flgH</name>
    <name type="ordered locus">PSPA7_4294</name>
</gene>
<accession>A6V9B2</accession>
<feature type="signal peptide" evidence="1">
    <location>
        <begin position="1"/>
        <end position="18"/>
    </location>
</feature>
<feature type="chain" id="PRO_1000050092" description="Flagellar L-ring protein">
    <location>
        <begin position="19"/>
        <end position="231"/>
    </location>
</feature>
<feature type="region of interest" description="Disordered" evidence="2">
    <location>
        <begin position="118"/>
        <end position="141"/>
    </location>
</feature>
<feature type="lipid moiety-binding region" description="N-palmitoyl cysteine" evidence="1">
    <location>
        <position position="19"/>
    </location>
</feature>
<feature type="lipid moiety-binding region" description="S-diacylglycerol cysteine" evidence="1">
    <location>
        <position position="19"/>
    </location>
</feature>
<keyword id="KW-0975">Bacterial flagellum</keyword>
<keyword id="KW-0998">Cell outer membrane</keyword>
<keyword id="KW-0449">Lipoprotein</keyword>
<keyword id="KW-0472">Membrane</keyword>
<keyword id="KW-0564">Palmitate</keyword>
<keyword id="KW-0732">Signal</keyword>
<name>FLGH_PSEP7</name>